<dbReference type="EC" id="4.2.3.30" evidence="3 4"/>
<dbReference type="EMBL" id="AY347882">
    <property type="protein sequence ID" value="AAQ72565.1"/>
    <property type="molecule type" value="mRNA"/>
</dbReference>
<dbReference type="EMBL" id="AP005114">
    <property type="protein sequence ID" value="BAD17270.1"/>
    <property type="molecule type" value="Genomic_DNA"/>
</dbReference>
<dbReference type="EMBL" id="AP008208">
    <property type="protein sequence ID" value="BAF09104.1"/>
    <property type="molecule type" value="Genomic_DNA"/>
</dbReference>
<dbReference type="EMBL" id="AP014958">
    <property type="protein sequence ID" value="BAS79346.1"/>
    <property type="molecule type" value="Genomic_DNA"/>
</dbReference>
<dbReference type="EMBL" id="AB126935">
    <property type="protein sequence ID" value="BAE72100.1"/>
    <property type="molecule type" value="mRNA"/>
</dbReference>
<dbReference type="RefSeq" id="XP_015625948.1">
    <property type="nucleotide sequence ID" value="XM_015770462.1"/>
</dbReference>
<dbReference type="RefSeq" id="XP_015625949.1">
    <property type="nucleotide sequence ID" value="XM_015770463.1"/>
</dbReference>
<dbReference type="SMR" id="Q6Z5J6"/>
<dbReference type="FunCoup" id="Q6Z5J6">
    <property type="interactions" value="130"/>
</dbReference>
<dbReference type="STRING" id="39947.Q6Z5J6"/>
<dbReference type="PaxDb" id="39947-Q6Z5J6"/>
<dbReference type="EnsemblPlants" id="Os02t0571300-01">
    <property type="protein sequence ID" value="Os02t0571300-01"/>
    <property type="gene ID" value="Os02g0571300"/>
</dbReference>
<dbReference type="GeneID" id="4329728"/>
<dbReference type="Gramene" id="Os02t0571300-01">
    <property type="protein sequence ID" value="Os02t0571300-01"/>
    <property type="gene ID" value="Os02g0571300"/>
</dbReference>
<dbReference type="KEGG" id="dosa:Os02g0571300"/>
<dbReference type="eggNOG" id="ENOG502QVGX">
    <property type="taxonomic scope" value="Eukaryota"/>
</dbReference>
<dbReference type="HOGENOM" id="CLU_003125_2_0_1"/>
<dbReference type="InParanoid" id="Q6Z5J6"/>
<dbReference type="OMA" id="KEYIHLM"/>
<dbReference type="OrthoDB" id="638746at2759"/>
<dbReference type="BioCyc" id="MetaCyc:MONOMER-13866"/>
<dbReference type="BRENDA" id="4.2.3.30">
    <property type="organism ID" value="4460"/>
</dbReference>
<dbReference type="UniPathway" id="UPA00213"/>
<dbReference type="Proteomes" id="UP000000763">
    <property type="component" value="Chromosome 2"/>
</dbReference>
<dbReference type="Proteomes" id="UP000059680">
    <property type="component" value="Chromosome 2"/>
</dbReference>
<dbReference type="GO" id="GO:0034282">
    <property type="term" value="F:ent-pimara-8(14),15-diene synthase activity"/>
    <property type="evidence" value="ECO:0007669"/>
    <property type="project" value="UniProtKB-EC"/>
</dbReference>
<dbReference type="GO" id="GO:0000287">
    <property type="term" value="F:magnesium ion binding"/>
    <property type="evidence" value="ECO:0000318"/>
    <property type="project" value="GO_Central"/>
</dbReference>
<dbReference type="GO" id="GO:0010333">
    <property type="term" value="F:terpene synthase activity"/>
    <property type="evidence" value="ECO:0000318"/>
    <property type="project" value="GO_Central"/>
</dbReference>
<dbReference type="GO" id="GO:0006952">
    <property type="term" value="P:defense response"/>
    <property type="evidence" value="ECO:0007669"/>
    <property type="project" value="UniProtKB-KW"/>
</dbReference>
<dbReference type="GO" id="GO:0016102">
    <property type="term" value="P:diterpenoid biosynthetic process"/>
    <property type="evidence" value="ECO:0000318"/>
    <property type="project" value="GO_Central"/>
</dbReference>
<dbReference type="CDD" id="cd00684">
    <property type="entry name" value="Terpene_cyclase_plant_C1"/>
    <property type="match status" value="1"/>
</dbReference>
<dbReference type="FunFam" id="1.50.10.160:FF:000002">
    <property type="entry name" value="cis-abienol synthase, chloroplastic"/>
    <property type="match status" value="1"/>
</dbReference>
<dbReference type="FunFam" id="1.50.10.130:FF:000003">
    <property type="entry name" value="Ent-cassa-12,15-diene synthase"/>
    <property type="match status" value="1"/>
</dbReference>
<dbReference type="FunFam" id="1.10.600.10:FF:000005">
    <property type="entry name" value="Ent-kaur-16-ene synthase, chloroplastic"/>
    <property type="match status" value="1"/>
</dbReference>
<dbReference type="Gene3D" id="1.50.10.160">
    <property type="match status" value="1"/>
</dbReference>
<dbReference type="Gene3D" id="1.10.600.10">
    <property type="entry name" value="Farnesyl Diphosphate Synthase"/>
    <property type="match status" value="1"/>
</dbReference>
<dbReference type="Gene3D" id="1.50.10.130">
    <property type="entry name" value="Terpene synthase, N-terminal domain"/>
    <property type="match status" value="1"/>
</dbReference>
<dbReference type="InterPro" id="IPR008949">
    <property type="entry name" value="Isoprenoid_synthase_dom_sf"/>
</dbReference>
<dbReference type="InterPro" id="IPR044814">
    <property type="entry name" value="Terpene_cyclase_plant_C1"/>
</dbReference>
<dbReference type="InterPro" id="IPR001906">
    <property type="entry name" value="Terpene_synth_N"/>
</dbReference>
<dbReference type="InterPro" id="IPR036965">
    <property type="entry name" value="Terpene_synth_N_sf"/>
</dbReference>
<dbReference type="InterPro" id="IPR050148">
    <property type="entry name" value="Terpene_synthase-like"/>
</dbReference>
<dbReference type="InterPro" id="IPR005630">
    <property type="entry name" value="Terpene_synthase_metal-bd"/>
</dbReference>
<dbReference type="InterPro" id="IPR008930">
    <property type="entry name" value="Terpenoid_cyclase/PrenylTrfase"/>
</dbReference>
<dbReference type="PANTHER" id="PTHR31739">
    <property type="entry name" value="ENT-COPALYL DIPHOSPHATE SYNTHASE, CHLOROPLASTIC"/>
    <property type="match status" value="1"/>
</dbReference>
<dbReference type="PANTHER" id="PTHR31739:SF17">
    <property type="entry name" value="ENT-SANDARACOPIMARA-8(14),15-DIENE SYNTHASE, CHLOROPLASTIC"/>
    <property type="match status" value="1"/>
</dbReference>
<dbReference type="Pfam" id="PF01397">
    <property type="entry name" value="Terpene_synth"/>
    <property type="match status" value="1"/>
</dbReference>
<dbReference type="Pfam" id="PF03936">
    <property type="entry name" value="Terpene_synth_C"/>
    <property type="match status" value="1"/>
</dbReference>
<dbReference type="SFLD" id="SFLDG01014">
    <property type="entry name" value="Terpene_Cyclase_Like_1_N-term"/>
    <property type="match status" value="1"/>
</dbReference>
<dbReference type="SUPFAM" id="SSF48239">
    <property type="entry name" value="Terpenoid cyclases/Protein prenyltransferases"/>
    <property type="match status" value="2"/>
</dbReference>
<dbReference type="SUPFAM" id="SSF48576">
    <property type="entry name" value="Terpenoid synthases"/>
    <property type="match status" value="1"/>
</dbReference>
<proteinExistence type="evidence at protein level"/>
<keyword id="KW-0456">Lyase</keyword>
<keyword id="KW-0460">Magnesium</keyword>
<keyword id="KW-0479">Metal-binding</keyword>
<keyword id="KW-0611">Plant defense</keyword>
<keyword id="KW-1185">Reference proteome</keyword>
<reference key="1">
    <citation type="journal article" date="2005" name="Plant Cell Rep.">
        <title>Isolation and characterization of a Ds-tagged rice (Oryza sativa L.) GA-responsive dwarf mutant defective in an early step of the gibberellin biosynthesis pathway.</title>
        <authorList>
            <person name="Margis-Pinheiro M."/>
            <person name="Zhou X.-R."/>
            <person name="Zhu Q.-H."/>
            <person name="Dennis E.S."/>
            <person name="Upadhyaya N.M."/>
        </authorList>
    </citation>
    <scope>NUCLEOTIDE SEQUENCE [MRNA]</scope>
    <scope>TISSUE SPECIFICITY</scope>
    <source>
        <strain>cv. Nipponbare</strain>
    </source>
</reference>
<reference key="2">
    <citation type="journal article" date="2005" name="Nature">
        <title>The map-based sequence of the rice genome.</title>
        <authorList>
            <consortium name="International rice genome sequencing project (IRGSP)"/>
        </authorList>
    </citation>
    <scope>NUCLEOTIDE SEQUENCE [LARGE SCALE GENOMIC DNA]</scope>
    <source>
        <strain>cv. Nipponbare</strain>
    </source>
</reference>
<reference key="3">
    <citation type="journal article" date="2008" name="Nucleic Acids Res.">
        <title>The rice annotation project database (RAP-DB): 2008 update.</title>
        <authorList>
            <consortium name="The rice annotation project (RAP)"/>
        </authorList>
    </citation>
    <scope>GENOME REANNOTATION</scope>
    <source>
        <strain>cv. Nipponbare</strain>
    </source>
</reference>
<reference key="4">
    <citation type="journal article" date="2013" name="Rice">
        <title>Improvement of the Oryza sativa Nipponbare reference genome using next generation sequence and optical map data.</title>
        <authorList>
            <person name="Kawahara Y."/>
            <person name="de la Bastide M."/>
            <person name="Hamilton J.P."/>
            <person name="Kanamori H."/>
            <person name="McCombie W.R."/>
            <person name="Ouyang S."/>
            <person name="Schwartz D.C."/>
            <person name="Tanaka T."/>
            <person name="Wu J."/>
            <person name="Zhou S."/>
            <person name="Childs K.L."/>
            <person name="Davidson R.M."/>
            <person name="Lin H."/>
            <person name="Quesada-Ocampo L."/>
            <person name="Vaillancourt B."/>
            <person name="Sakai H."/>
            <person name="Lee S.S."/>
            <person name="Kim J."/>
            <person name="Numa H."/>
            <person name="Itoh T."/>
            <person name="Buell C.R."/>
            <person name="Matsumoto T."/>
        </authorList>
    </citation>
    <scope>GENOME REANNOTATION</scope>
    <source>
        <strain>cv. Nipponbare</strain>
    </source>
</reference>
<reference key="5">
    <citation type="journal article" date="2006" name="Biosci. Biotechnol. Biochem.">
        <title>Characterization of a rice gene family encoding type-A diterpene cyclases.</title>
        <authorList>
            <person name="Kanno Y."/>
            <person name="Otomo K."/>
            <person name="Kenmoku H."/>
            <person name="Mitsuhashi W."/>
            <person name="Yamane H."/>
            <person name="Oikawa H."/>
            <person name="Toshima H."/>
            <person name="Matsuoka M."/>
            <person name="Sassa T."/>
            <person name="Toyomasu T."/>
        </authorList>
    </citation>
    <scope>NUCLEOTIDE SEQUENCE [MRNA] OF 44-821</scope>
    <scope>FUNCTION</scope>
    <scope>CATALYTIC ACTIVITY</scope>
    <scope>PATHWAY</scope>
    <source>
        <strain>cv. Nipponbare</strain>
    </source>
</reference>
<reference key="6">
    <citation type="journal article" date="2007" name="Proc. Natl. Acad. Sci. U.S.A.">
        <title>Following evolution's lead to a single residue switch for diterpene synthase product outcome.</title>
        <authorList>
            <person name="Xu M."/>
            <person name="Wilderman P.R."/>
            <person name="Peters R.J."/>
        </authorList>
    </citation>
    <scope>FUNCTION</scope>
    <scope>MUTAGENESIS OF THR-664</scope>
    <scope>CATALYTIC ACTIVITY</scope>
    <scope>PATHWAY</scope>
</reference>
<gene>
    <name evidence="6" type="primary">KSL5</name>
    <name evidence="5" type="synonym">KS6</name>
    <name evidence="7" type="ordered locus">Os02g0571300</name>
    <name evidence="7" type="ordered locus">LOC_Os02g36220</name>
    <name evidence="8" type="ORF">P0689H05.20</name>
</gene>
<protein>
    <recommendedName>
        <fullName evidence="7">Ent-pimara-8(14),15-diene synthase</fullName>
        <ecNumber evidence="3 4">4.2.3.30</ecNumber>
    </recommendedName>
    <alternativeName>
        <fullName evidence="6">Ent-kaurene synthase-like 5</fullName>
        <shortName evidence="6">OsKS5</shortName>
        <shortName evidence="6">OsKSL5j</shortName>
    </alternativeName>
    <alternativeName>
        <fullName evidence="5">Ent-kaurene synthase-like 6</fullName>
        <shortName evidence="5">OsKS6</shortName>
    </alternativeName>
</protein>
<name>KSL5_ORYSJ</name>
<comment type="function">
    <text evidence="3 4">Involved in the biosynthesis of ent-kaurene diterpenoids natural products (PubMed:16861806, PubMed:17456599). Catalyzes the conversion of ent-copalyl diphosphate to ent-pimara-8(14),15-diene (PubMed:16861806, PubMed:17456599).</text>
</comment>
<comment type="catalytic activity">
    <reaction evidence="3 4">
        <text>ent-copalyl diphosphate = ent-pimara-8(14),15-diene + diphosphate</text>
        <dbReference type="Rhea" id="RHEA:25540"/>
        <dbReference type="ChEBI" id="CHEBI:33019"/>
        <dbReference type="ChEBI" id="CHEBI:50063"/>
        <dbReference type="ChEBI" id="CHEBI:58553"/>
        <dbReference type="EC" id="4.2.3.30"/>
    </reaction>
    <physiologicalReaction direction="left-to-right" evidence="3 4">
        <dbReference type="Rhea" id="RHEA:25541"/>
    </physiologicalReaction>
</comment>
<comment type="cofactor">
    <cofactor evidence="1">
        <name>Mg(2+)</name>
        <dbReference type="ChEBI" id="CHEBI:18420"/>
    </cofactor>
    <text evidence="1">Binds 3 Mg(2+) ions per subunit.</text>
</comment>
<comment type="pathway">
    <text evidence="3 4">Secondary metabolite biosynthesis; terpenoid biosynthesis.</text>
</comment>
<comment type="tissue specificity">
    <text evidence="2">Highly expressed in roots, at intermediate levels in stems and at lower levels in leaves.</text>
</comment>
<comment type="domain">
    <text evidence="7">The Asp-Asp-Xaa-Xaa-Asp/Glu (DDXXD/E) motif is important for the catalytic activity, presumably through binding to Mg(2+).</text>
</comment>
<comment type="similarity">
    <text evidence="7">Belongs to the terpene synthase family.</text>
</comment>
<organism>
    <name type="scientific">Oryza sativa subsp. japonica</name>
    <name type="common">Rice</name>
    <dbReference type="NCBI Taxonomy" id="39947"/>
    <lineage>
        <taxon>Eukaryota</taxon>
        <taxon>Viridiplantae</taxon>
        <taxon>Streptophyta</taxon>
        <taxon>Embryophyta</taxon>
        <taxon>Tracheophyta</taxon>
        <taxon>Spermatophyta</taxon>
        <taxon>Magnoliopsida</taxon>
        <taxon>Liliopsida</taxon>
        <taxon>Poales</taxon>
        <taxon>Poaceae</taxon>
        <taxon>BOP clade</taxon>
        <taxon>Oryzoideae</taxon>
        <taxon>Oryzeae</taxon>
        <taxon>Oryzinae</taxon>
        <taxon>Oryza</taxon>
        <taxon>Oryza sativa</taxon>
    </lineage>
</organism>
<sequence>MILPMSSACLGQFLRASPRGMIEQFNRAPPLRVSIRGAAGVEKSLGLGRNAGSQQGMQKNQLQDKIRKQLREVQLSPSSYDTAWVAMVPVQGSHQTPRFPQCIEWILQNQHDDGSWGTNLPGSVVNKDILLCTLACVVALKRWNTGRDHISRGLNFIGKNFWVAMDEQTIAPVGFNITFSGLLNLATGTGLEFPVMQTDIDGIFHMRKIELERDAYGTASSRRAFMAYVSEGLGSLQDWDQVMAYQRKNRSIFNSPSAAAATVIHGHNDSALCYLDSLVSKLDGPVPVMYPQNAYSQLGMVDTLEKMGISNNFSCEISDILDMIYRLWIHNEEELMLDMGTCAMAFRLLRMHGYDISSDGMAQFVEQSSFDDSIHGYLNDTKALLELYRSSQIRCLEDDLILQDIGSWSARVLQEKISSKMTHKSEMLEVEYALKFPVYATLERLEQKRNIEQFKTKEQLKIEGFKLLKSGYRGAITHDEILALAVDEFHSSQSVYQQELQDLNSWVAQTRLDELKFARLMPSITYFSAAATMFPSELSEARIAWTQNCILTTTVDDFFDGDGSKEEMENLVKLIEKWDGHGEIGFSSECVEILFYAIYNTSKQIAEKAVPLQKRNVVDHIAESWWFTVRGMLTEAEWRMDKYVPTTVEEYMSAAVDSFALGPTITSAALFVGPELSEEVFRSKEYIHLMNLANTIGRLLNDMQTYEKEIKMGKVNSVMLHALSHSGGGRGSPEASMEEAKREMRRVLQGSRCDLLRLVTRDGGVVPPPCRKLFWFMSKVLHFVYMEKDGYFTADGMMASANAVILDPLQVTLLPSGLGTL</sequence>
<evidence type="ECO:0000250" key="1">
    <source>
        <dbReference type="UniProtKB" id="Q40577"/>
    </source>
</evidence>
<evidence type="ECO:0000269" key="2">
    <source>
    </source>
</evidence>
<evidence type="ECO:0000269" key="3">
    <source>
    </source>
</evidence>
<evidence type="ECO:0000269" key="4">
    <source>
    </source>
</evidence>
<evidence type="ECO:0000303" key="5">
    <source>
    </source>
</evidence>
<evidence type="ECO:0000303" key="6">
    <source>
    </source>
</evidence>
<evidence type="ECO:0000305" key="7"/>
<evidence type="ECO:0000312" key="8">
    <source>
        <dbReference type="EMBL" id="BAD17270.1"/>
    </source>
</evidence>
<accession>Q6Z5J6</accession>
<accession>A0A0P0VKP5</accession>
<accession>Q2PHF2</accession>
<accession>Q69DS5</accession>
<feature type="chain" id="PRO_0000372317" description="Ent-pimara-8(14),15-diene synthase">
    <location>
        <begin position="1"/>
        <end position="821"/>
    </location>
</feature>
<feature type="short sequence motif" description="DDXXD motif" evidence="7">
    <location>
        <begin position="556"/>
        <end position="560"/>
    </location>
</feature>
<feature type="binding site" evidence="1">
    <location>
        <position position="556"/>
    </location>
    <ligand>
        <name>Mg(2+)</name>
        <dbReference type="ChEBI" id="CHEBI:18420"/>
        <label>1</label>
    </ligand>
</feature>
<feature type="binding site" evidence="1">
    <location>
        <position position="556"/>
    </location>
    <ligand>
        <name>Mg(2+)</name>
        <dbReference type="ChEBI" id="CHEBI:18420"/>
        <label>2</label>
    </ligand>
</feature>
<feature type="binding site" evidence="1">
    <location>
        <position position="560"/>
    </location>
    <ligand>
        <name>Mg(2+)</name>
        <dbReference type="ChEBI" id="CHEBI:18420"/>
        <label>1</label>
    </ligand>
</feature>
<feature type="binding site" evidence="1">
    <location>
        <position position="560"/>
    </location>
    <ligand>
        <name>Mg(2+)</name>
        <dbReference type="ChEBI" id="CHEBI:18420"/>
        <label>2</label>
    </ligand>
</feature>
<feature type="binding site" evidence="1">
    <location>
        <position position="701"/>
    </location>
    <ligand>
        <name>Mg(2+)</name>
        <dbReference type="ChEBI" id="CHEBI:18420"/>
        <label>3</label>
    </ligand>
</feature>
<feature type="binding site" evidence="1">
    <location>
        <position position="705"/>
    </location>
    <ligand>
        <name>Mg(2+)</name>
        <dbReference type="ChEBI" id="CHEBI:18420"/>
        <label>3</label>
    </ligand>
</feature>
<feature type="binding site" evidence="1">
    <location>
        <position position="709"/>
    </location>
    <ligand>
        <name>Mg(2+)</name>
        <dbReference type="ChEBI" id="CHEBI:18420"/>
        <label>3</label>
    </ligand>
</feature>
<feature type="mutagenesis site" description="Changes catalytic activity. Converts syn-copalyl diphosphate to aphidicol-15-ene and diphosphate." evidence="4">
    <original>T</original>
    <variation>I</variation>
    <location>
        <position position="664"/>
    </location>
</feature>
<feature type="sequence conflict" description="In Ref. 5; BAE72100." evidence="7" ref="5">
    <original>I</original>
    <variation>V</variation>
    <location>
        <position position="324"/>
    </location>
</feature>
<feature type="sequence conflict" description="In Ref. 1; AAQ72565." evidence="7" ref="1">
    <original>C</original>
    <variation>R</variation>
    <location>
        <position position="770"/>
    </location>
</feature>
<feature type="sequence conflict" description="In Ref. 1; AAQ72565." evidence="7" ref="1">
    <original>M</original>
    <variation>V</variation>
    <location>
        <position position="797"/>
    </location>
</feature>
<feature type="sequence conflict" description="In Ref. 5; BAE72100." evidence="7" ref="5">
    <original>N</original>
    <variation>D</variation>
    <location>
        <position position="802"/>
    </location>
</feature>